<keyword id="KW-1185">Reference proteome</keyword>
<accession>Q9ZD40</accession>
<feature type="chain" id="PRO_0000101385" description="Uncharacterized protein RP507">
    <location>
        <begin position="1"/>
        <end position="145"/>
    </location>
</feature>
<sequence>MSLQSSIYRIIKFIIFLTINISIYANAKDIANLQITSNTLIIDRIKQKAEYSGNVIVYFDNAILRTQKLYIFYKTIGEKQVIDHIVVPSKLTVERKINNELLLADSAKYFFVDKQLILLGNVILQRNDHVLKTNKLIYYVEIVRK</sequence>
<organism>
    <name type="scientific">Rickettsia prowazekii (strain Madrid E)</name>
    <dbReference type="NCBI Taxonomy" id="272947"/>
    <lineage>
        <taxon>Bacteria</taxon>
        <taxon>Pseudomonadati</taxon>
        <taxon>Pseudomonadota</taxon>
        <taxon>Alphaproteobacteria</taxon>
        <taxon>Rickettsiales</taxon>
        <taxon>Rickettsiaceae</taxon>
        <taxon>Rickettsieae</taxon>
        <taxon>Rickettsia</taxon>
        <taxon>typhus group</taxon>
    </lineage>
</organism>
<name>Y507_RICPR</name>
<gene>
    <name type="ordered locus">RP507</name>
</gene>
<dbReference type="EMBL" id="AJ235272">
    <property type="protein sequence ID" value="CAA14959.1"/>
    <property type="molecule type" value="Genomic_DNA"/>
</dbReference>
<dbReference type="PIR" id="E71654">
    <property type="entry name" value="E71654"/>
</dbReference>
<dbReference type="RefSeq" id="NP_220883.1">
    <property type="nucleotide sequence ID" value="NC_000963.1"/>
</dbReference>
<dbReference type="RefSeq" id="WP_004597758.1">
    <property type="nucleotide sequence ID" value="NC_000963.1"/>
</dbReference>
<dbReference type="SMR" id="Q9ZD40"/>
<dbReference type="STRING" id="272947.gene:17555587"/>
<dbReference type="EnsemblBacteria" id="CAA14959">
    <property type="protein sequence ID" value="CAA14959"/>
    <property type="gene ID" value="CAA14959"/>
</dbReference>
<dbReference type="KEGG" id="rpr:RP507"/>
<dbReference type="PATRIC" id="fig|272947.5.peg.516"/>
<dbReference type="eggNOG" id="COG1934">
    <property type="taxonomic scope" value="Bacteria"/>
</dbReference>
<dbReference type="HOGENOM" id="CLU_134430_0_0_5"/>
<dbReference type="OrthoDB" id="9811926at2"/>
<dbReference type="Proteomes" id="UP000002480">
    <property type="component" value="Chromosome"/>
</dbReference>
<dbReference type="Gene3D" id="2.60.450.10">
    <property type="entry name" value="Lipopolysaccharide (LPS) transport protein A like domain"/>
    <property type="match status" value="1"/>
</dbReference>
<dbReference type="InterPro" id="IPR005653">
    <property type="entry name" value="OstA-like_N"/>
</dbReference>
<dbReference type="Pfam" id="PF03968">
    <property type="entry name" value="LptD_N"/>
    <property type="match status" value="1"/>
</dbReference>
<protein>
    <recommendedName>
        <fullName>Uncharacterized protein RP507</fullName>
    </recommendedName>
</protein>
<reference key="1">
    <citation type="journal article" date="1998" name="Nature">
        <title>The genome sequence of Rickettsia prowazekii and the origin of mitochondria.</title>
        <authorList>
            <person name="Andersson S.G.E."/>
            <person name="Zomorodipour A."/>
            <person name="Andersson J.O."/>
            <person name="Sicheritz-Ponten T."/>
            <person name="Alsmark U.C.M."/>
            <person name="Podowski R.M."/>
            <person name="Naeslund A.K."/>
            <person name="Eriksson A.-S."/>
            <person name="Winkler H.H."/>
            <person name="Kurland C.G."/>
        </authorList>
    </citation>
    <scope>NUCLEOTIDE SEQUENCE [LARGE SCALE GENOMIC DNA]</scope>
    <source>
        <strain>Madrid E</strain>
    </source>
</reference>
<proteinExistence type="predicted"/>